<feature type="chain" id="PRO_0000062782" description="Sugar fermentation stimulation protein B">
    <location>
        <begin position="1"/>
        <end position="92"/>
    </location>
</feature>
<feature type="DNA-binding region" description="H-T-H motif" evidence="1">
    <location>
        <begin position="50"/>
        <end position="69"/>
    </location>
</feature>
<organism>
    <name type="scientific">Shigella flexneri</name>
    <dbReference type="NCBI Taxonomy" id="623"/>
    <lineage>
        <taxon>Bacteria</taxon>
        <taxon>Pseudomonadati</taxon>
        <taxon>Pseudomonadota</taxon>
        <taxon>Gammaproteobacteria</taxon>
        <taxon>Enterobacterales</taxon>
        <taxon>Enterobacteriaceae</taxon>
        <taxon>Shigella</taxon>
    </lineage>
</organism>
<accession>P0ACH4</accession>
<accession>P18837</accession>
<reference key="1">
    <citation type="journal article" date="2002" name="Nucleic Acids Res.">
        <title>Genome sequence of Shigella flexneri 2a: insights into pathogenicity through comparison with genomes of Escherichia coli K12 and O157.</title>
        <authorList>
            <person name="Jin Q."/>
            <person name="Yuan Z."/>
            <person name="Xu J."/>
            <person name="Wang Y."/>
            <person name="Shen Y."/>
            <person name="Lu W."/>
            <person name="Wang J."/>
            <person name="Liu H."/>
            <person name="Yang J."/>
            <person name="Yang F."/>
            <person name="Zhang X."/>
            <person name="Zhang J."/>
            <person name="Yang G."/>
            <person name="Wu H."/>
            <person name="Qu D."/>
            <person name="Dong J."/>
            <person name="Sun L."/>
            <person name="Xue Y."/>
            <person name="Zhao A."/>
            <person name="Gao Y."/>
            <person name="Zhu J."/>
            <person name="Kan B."/>
            <person name="Ding K."/>
            <person name="Chen S."/>
            <person name="Cheng H."/>
            <person name="Yao Z."/>
            <person name="He B."/>
            <person name="Chen R."/>
            <person name="Ma D."/>
            <person name="Qiang B."/>
            <person name="Wen Y."/>
            <person name="Hou Y."/>
            <person name="Yu J."/>
        </authorList>
    </citation>
    <scope>NUCLEOTIDE SEQUENCE [LARGE SCALE GENOMIC DNA]</scope>
    <source>
        <strain>301 / Serotype 2a</strain>
    </source>
</reference>
<reference key="2">
    <citation type="journal article" date="2003" name="Infect. Immun.">
        <title>Complete genome sequence and comparative genomics of Shigella flexneri serotype 2a strain 2457T.</title>
        <authorList>
            <person name="Wei J."/>
            <person name="Goldberg M.B."/>
            <person name="Burland V."/>
            <person name="Venkatesan M.M."/>
            <person name="Deng W."/>
            <person name="Fournier G."/>
            <person name="Mayhew G.F."/>
            <person name="Plunkett G. III"/>
            <person name="Rose D.J."/>
            <person name="Darling A."/>
            <person name="Mau B."/>
            <person name="Perna N.T."/>
            <person name="Payne S.M."/>
            <person name="Runyen-Janecky L.J."/>
            <person name="Zhou S."/>
            <person name="Schwartz D.C."/>
            <person name="Blattner F.R."/>
        </authorList>
    </citation>
    <scope>NUCLEOTIDE SEQUENCE [LARGE SCALE GENOMIC DNA]</scope>
    <source>
        <strain>ATCC 700930 / 2457T / Serotype 2a</strain>
    </source>
</reference>
<sequence>MESNFIDWHPADIIAGLRKKGTSMAAESRRNGLSSSTLANALSRPWPKGEMIIAKALGTDPWVIWPSRYHDPQTHEFIDRTQLMRSYTKPKK</sequence>
<dbReference type="EMBL" id="AE005674">
    <property type="protein sequence ID" value="AAN44694.1"/>
    <property type="molecule type" value="Genomic_DNA"/>
</dbReference>
<dbReference type="EMBL" id="AE014073">
    <property type="protein sequence ID" value="AAP18508.1"/>
    <property type="molecule type" value="Genomic_DNA"/>
</dbReference>
<dbReference type="RefSeq" id="WP_000445413.1">
    <property type="nucleotide sequence ID" value="NZ_WPGW01000004.1"/>
</dbReference>
<dbReference type="SMR" id="P0ACH4"/>
<dbReference type="STRING" id="198214.SF3228"/>
<dbReference type="PaxDb" id="198214-SF3228"/>
<dbReference type="GeneID" id="93778793"/>
<dbReference type="KEGG" id="sfl:SF3228"/>
<dbReference type="KEGG" id="sfx:S3446"/>
<dbReference type="PATRIC" id="fig|198214.7.peg.3829"/>
<dbReference type="HOGENOM" id="CLU_162005_0_1_6"/>
<dbReference type="Proteomes" id="UP000001006">
    <property type="component" value="Chromosome"/>
</dbReference>
<dbReference type="Proteomes" id="UP000002673">
    <property type="component" value="Chromosome"/>
</dbReference>
<dbReference type="GO" id="GO:0003677">
    <property type="term" value="F:DNA binding"/>
    <property type="evidence" value="ECO:0007669"/>
    <property type="project" value="UniProtKB-KW"/>
</dbReference>
<dbReference type="FunFam" id="1.10.260.40:FF:000017">
    <property type="entry name" value="DNA-binding transcriptional regulator SfsB"/>
    <property type="match status" value="1"/>
</dbReference>
<dbReference type="Gene3D" id="1.10.260.40">
    <property type="entry name" value="lambda repressor-like DNA-binding domains"/>
    <property type="match status" value="1"/>
</dbReference>
<dbReference type="InterPro" id="IPR010982">
    <property type="entry name" value="Lambda_DNA-bd_dom_sf"/>
</dbReference>
<dbReference type="InterPro" id="IPR038722">
    <property type="entry name" value="Ner_HTH_dom"/>
</dbReference>
<dbReference type="NCBIfam" id="NF007670">
    <property type="entry name" value="PRK10344.1"/>
    <property type="match status" value="1"/>
</dbReference>
<dbReference type="Pfam" id="PF13693">
    <property type="entry name" value="HTH_35"/>
    <property type="match status" value="1"/>
</dbReference>
<dbReference type="SUPFAM" id="SSF47413">
    <property type="entry name" value="lambda repressor-like DNA-binding domains"/>
    <property type="match status" value="1"/>
</dbReference>
<name>SFSB_SHIFL</name>
<protein>
    <recommendedName>
        <fullName>Sugar fermentation stimulation protein B</fullName>
    </recommendedName>
    <alternativeName>
        <fullName>Ner-like protein</fullName>
    </alternativeName>
</protein>
<evidence type="ECO:0000250" key="1"/>
<evidence type="ECO:0000305" key="2"/>
<gene>
    <name type="primary">sfsB</name>
    <name type="ordered locus">SF3228</name>
    <name type="ordered locus">S3446</name>
</gene>
<comment type="function">
    <text evidence="1">This protein is involved in positive regulation of the metabolism of sugars.</text>
</comment>
<comment type="similarity">
    <text evidence="2">Belongs to the ner transcriptional regulatory family.</text>
</comment>
<proteinExistence type="inferred from homology"/>
<keyword id="KW-0010">Activator</keyword>
<keyword id="KW-0238">DNA-binding</keyword>
<keyword id="KW-1185">Reference proteome</keyword>
<keyword id="KW-0804">Transcription</keyword>
<keyword id="KW-0805">Transcription regulation</keyword>